<organism>
    <name type="scientific">Vibrio cholerae serotype O1 (strain ATCC 39315 / El Tor Inaba N16961)</name>
    <dbReference type="NCBI Taxonomy" id="243277"/>
    <lineage>
        <taxon>Bacteria</taxon>
        <taxon>Pseudomonadati</taxon>
        <taxon>Pseudomonadota</taxon>
        <taxon>Gammaproteobacteria</taxon>
        <taxon>Vibrionales</taxon>
        <taxon>Vibrionaceae</taxon>
        <taxon>Vibrio</taxon>
    </lineage>
</organism>
<comment type="function">
    <text evidence="1">Contributes to the efficiency of the cell division process by stabilizing the polymeric form of the cell division protein FtsZ. Acts by promoting interactions between FtsZ protofilaments and suppressing the GTPase activity of FtsZ.</text>
</comment>
<comment type="subunit">
    <text evidence="1">Interacts directly with FtsZ.</text>
</comment>
<comment type="subcellular location">
    <subcellularLocation>
        <location evidence="1">Cytoplasm</location>
    </subcellularLocation>
</comment>
<comment type="similarity">
    <text evidence="1">Belongs to the ZapC family.</text>
</comment>
<dbReference type="EMBL" id="AE003852">
    <property type="protein sequence ID" value="AAF94645.1"/>
    <property type="molecule type" value="Genomic_DNA"/>
</dbReference>
<dbReference type="PIR" id="C82193">
    <property type="entry name" value="C82193"/>
</dbReference>
<dbReference type="RefSeq" id="NP_231131.1">
    <property type="nucleotide sequence ID" value="NC_002505.1"/>
</dbReference>
<dbReference type="RefSeq" id="WP_000917529.1">
    <property type="nucleotide sequence ID" value="NZ_LT906614.1"/>
</dbReference>
<dbReference type="SMR" id="Q9KRZ3"/>
<dbReference type="STRING" id="243277.VC_1490"/>
<dbReference type="DNASU" id="2613996"/>
<dbReference type="EnsemblBacteria" id="AAF94645">
    <property type="protein sequence ID" value="AAF94645"/>
    <property type="gene ID" value="VC_1490"/>
</dbReference>
<dbReference type="KEGG" id="vch:VC_1490"/>
<dbReference type="PATRIC" id="fig|243277.26.peg.1417"/>
<dbReference type="eggNOG" id="ENOG502Z8AH">
    <property type="taxonomic scope" value="Bacteria"/>
</dbReference>
<dbReference type="HOGENOM" id="CLU_128248_0_0_6"/>
<dbReference type="Proteomes" id="UP000000584">
    <property type="component" value="Chromosome 1"/>
</dbReference>
<dbReference type="GO" id="GO:0005737">
    <property type="term" value="C:cytoplasm"/>
    <property type="evidence" value="ECO:0007669"/>
    <property type="project" value="UniProtKB-SubCell"/>
</dbReference>
<dbReference type="GO" id="GO:0000917">
    <property type="term" value="P:division septum assembly"/>
    <property type="evidence" value="ECO:0007669"/>
    <property type="project" value="UniProtKB-KW"/>
</dbReference>
<dbReference type="GO" id="GO:0043093">
    <property type="term" value="P:FtsZ-dependent cytokinesis"/>
    <property type="evidence" value="ECO:0007669"/>
    <property type="project" value="UniProtKB-UniRule"/>
</dbReference>
<dbReference type="HAMAP" id="MF_00906">
    <property type="entry name" value="ZapC"/>
    <property type="match status" value="1"/>
</dbReference>
<dbReference type="InterPro" id="IPR009809">
    <property type="entry name" value="ZapC"/>
</dbReference>
<dbReference type="InterPro" id="IPR048372">
    <property type="entry name" value="ZapC_C"/>
</dbReference>
<dbReference type="InterPro" id="IPR048373">
    <property type="entry name" value="ZapC_N"/>
</dbReference>
<dbReference type="Pfam" id="PF07126">
    <property type="entry name" value="ZapC_C"/>
    <property type="match status" value="1"/>
</dbReference>
<dbReference type="Pfam" id="PF21083">
    <property type="entry name" value="ZapC_N"/>
    <property type="match status" value="1"/>
</dbReference>
<dbReference type="PIRSF" id="PIRSF010252">
    <property type="entry name" value="ZapC"/>
    <property type="match status" value="1"/>
</dbReference>
<sequence>MLKPSDKWSWYFSDSEGYLMLNLGDDMLFRTNLSRNLLVDCAFIENPFTVDDASDFQLYKEHIACLPLSEPRKAELALYCVAAKRFHKPVQPKSWFFDVQGTGYTPQQGQLISLRNSLNSGIFIALEVGENATLCAYSDLVSFALNGSKTLEFGQVIKVMHDRMSDVNTLLYTPQMAMVS</sequence>
<evidence type="ECO:0000255" key="1">
    <source>
        <dbReference type="HAMAP-Rule" id="MF_00906"/>
    </source>
</evidence>
<protein>
    <recommendedName>
        <fullName evidence="1">Cell division protein ZapC</fullName>
    </recommendedName>
</protein>
<reference key="1">
    <citation type="journal article" date="2000" name="Nature">
        <title>DNA sequence of both chromosomes of the cholera pathogen Vibrio cholerae.</title>
        <authorList>
            <person name="Heidelberg J.F."/>
            <person name="Eisen J.A."/>
            <person name="Nelson W.C."/>
            <person name="Clayton R.A."/>
            <person name="Gwinn M.L."/>
            <person name="Dodson R.J."/>
            <person name="Haft D.H."/>
            <person name="Hickey E.K."/>
            <person name="Peterson J.D."/>
            <person name="Umayam L.A."/>
            <person name="Gill S.R."/>
            <person name="Nelson K.E."/>
            <person name="Read T.D."/>
            <person name="Tettelin H."/>
            <person name="Richardson D.L."/>
            <person name="Ermolaeva M.D."/>
            <person name="Vamathevan J.J."/>
            <person name="Bass S."/>
            <person name="Qin H."/>
            <person name="Dragoi I."/>
            <person name="Sellers P."/>
            <person name="McDonald L.A."/>
            <person name="Utterback T.R."/>
            <person name="Fleischmann R.D."/>
            <person name="Nierman W.C."/>
            <person name="White O."/>
            <person name="Salzberg S.L."/>
            <person name="Smith H.O."/>
            <person name="Colwell R.R."/>
            <person name="Mekalanos J.J."/>
            <person name="Venter J.C."/>
            <person name="Fraser C.M."/>
        </authorList>
    </citation>
    <scope>NUCLEOTIDE SEQUENCE [LARGE SCALE GENOMIC DNA]</scope>
    <source>
        <strain>ATCC 39315 / El Tor Inaba N16961</strain>
    </source>
</reference>
<accession>Q9KRZ3</accession>
<proteinExistence type="inferred from homology"/>
<keyword id="KW-0131">Cell cycle</keyword>
<keyword id="KW-0132">Cell division</keyword>
<keyword id="KW-0963">Cytoplasm</keyword>
<keyword id="KW-1185">Reference proteome</keyword>
<keyword id="KW-0717">Septation</keyword>
<name>ZAPC_VIBCH</name>
<feature type="chain" id="PRO_0000413792" description="Cell division protein ZapC">
    <location>
        <begin position="1"/>
        <end position="180"/>
    </location>
</feature>
<gene>
    <name evidence="1" type="primary">zapC</name>
    <name type="ordered locus">VC_1490</name>
</gene>